<name>ADDA_NATTJ</name>
<reference key="1">
    <citation type="submission" date="2008-04" db="EMBL/GenBank/DDBJ databases">
        <title>Complete sequence of chromosome of Natranaerobius thermophilus JW/NM-WN-LF.</title>
        <authorList>
            <consortium name="US DOE Joint Genome Institute"/>
            <person name="Copeland A."/>
            <person name="Lucas S."/>
            <person name="Lapidus A."/>
            <person name="Glavina del Rio T."/>
            <person name="Dalin E."/>
            <person name="Tice H."/>
            <person name="Bruce D."/>
            <person name="Goodwin L."/>
            <person name="Pitluck S."/>
            <person name="Chertkov O."/>
            <person name="Brettin T."/>
            <person name="Detter J.C."/>
            <person name="Han C."/>
            <person name="Kuske C.R."/>
            <person name="Schmutz J."/>
            <person name="Larimer F."/>
            <person name="Land M."/>
            <person name="Hauser L."/>
            <person name="Kyrpides N."/>
            <person name="Lykidis A."/>
            <person name="Mesbah N.M."/>
            <person name="Wiegel J."/>
        </authorList>
    </citation>
    <scope>NUCLEOTIDE SEQUENCE [LARGE SCALE GENOMIC DNA]</scope>
    <source>
        <strain>ATCC BAA-1301 / DSM 18059 / JW/NM-WN-LF</strain>
    </source>
</reference>
<dbReference type="EC" id="3.1.-.-" evidence="1"/>
<dbReference type="EC" id="5.6.2.4" evidence="1"/>
<dbReference type="EMBL" id="CP001034">
    <property type="protein sequence ID" value="ACB85427.1"/>
    <property type="molecule type" value="Genomic_DNA"/>
</dbReference>
<dbReference type="RefSeq" id="WP_012448292.1">
    <property type="nucleotide sequence ID" value="NC_010718.1"/>
</dbReference>
<dbReference type="SMR" id="B2A610"/>
<dbReference type="FunCoup" id="B2A610">
    <property type="interactions" value="17"/>
</dbReference>
<dbReference type="STRING" id="457570.Nther_1855"/>
<dbReference type="KEGG" id="nth:Nther_1855"/>
<dbReference type="eggNOG" id="COG1074">
    <property type="taxonomic scope" value="Bacteria"/>
</dbReference>
<dbReference type="HOGENOM" id="CLU_001114_3_1_9"/>
<dbReference type="InParanoid" id="B2A610"/>
<dbReference type="OrthoDB" id="9810135at2"/>
<dbReference type="Proteomes" id="UP000001683">
    <property type="component" value="Chromosome"/>
</dbReference>
<dbReference type="GO" id="GO:0005829">
    <property type="term" value="C:cytosol"/>
    <property type="evidence" value="ECO:0007669"/>
    <property type="project" value="TreeGrafter"/>
</dbReference>
<dbReference type="GO" id="GO:0033202">
    <property type="term" value="C:DNA helicase complex"/>
    <property type="evidence" value="ECO:0007669"/>
    <property type="project" value="TreeGrafter"/>
</dbReference>
<dbReference type="GO" id="GO:0043138">
    <property type="term" value="F:3'-5' DNA helicase activity"/>
    <property type="evidence" value="ECO:0007669"/>
    <property type="project" value="UniProtKB-UniRule"/>
</dbReference>
<dbReference type="GO" id="GO:0008408">
    <property type="term" value="F:3'-5' exonuclease activity"/>
    <property type="evidence" value="ECO:0007669"/>
    <property type="project" value="UniProtKB-UniRule"/>
</dbReference>
<dbReference type="GO" id="GO:0005524">
    <property type="term" value="F:ATP binding"/>
    <property type="evidence" value="ECO:0007669"/>
    <property type="project" value="UniProtKB-UniRule"/>
</dbReference>
<dbReference type="GO" id="GO:0016887">
    <property type="term" value="F:ATP hydrolysis activity"/>
    <property type="evidence" value="ECO:0007669"/>
    <property type="project" value="RHEA"/>
</dbReference>
<dbReference type="GO" id="GO:0003690">
    <property type="term" value="F:double-stranded DNA binding"/>
    <property type="evidence" value="ECO:0007669"/>
    <property type="project" value="UniProtKB-UniRule"/>
</dbReference>
<dbReference type="GO" id="GO:0000724">
    <property type="term" value="P:double-strand break repair via homologous recombination"/>
    <property type="evidence" value="ECO:0007669"/>
    <property type="project" value="UniProtKB-UniRule"/>
</dbReference>
<dbReference type="CDD" id="cd17932">
    <property type="entry name" value="DEXQc_UvrD"/>
    <property type="match status" value="1"/>
</dbReference>
<dbReference type="CDD" id="cd18807">
    <property type="entry name" value="SF1_C_UvrD"/>
    <property type="match status" value="1"/>
</dbReference>
<dbReference type="FunFam" id="3.40.50.300:FF:001236">
    <property type="entry name" value="ATP-dependent helicase/nuclease subunit A"/>
    <property type="match status" value="1"/>
</dbReference>
<dbReference type="Gene3D" id="1.10.274.50">
    <property type="match status" value="1"/>
</dbReference>
<dbReference type="Gene3D" id="3.90.320.10">
    <property type="match status" value="1"/>
</dbReference>
<dbReference type="Gene3D" id="3.40.50.300">
    <property type="entry name" value="P-loop containing nucleotide triphosphate hydrolases"/>
    <property type="match status" value="3"/>
</dbReference>
<dbReference type="Gene3D" id="1.10.486.10">
    <property type="entry name" value="PCRA, domain 4"/>
    <property type="match status" value="1"/>
</dbReference>
<dbReference type="HAMAP" id="MF_01451">
    <property type="entry name" value="AddA"/>
    <property type="match status" value="1"/>
</dbReference>
<dbReference type="InterPro" id="IPR014152">
    <property type="entry name" value="AddA"/>
</dbReference>
<dbReference type="InterPro" id="IPR014017">
    <property type="entry name" value="DNA_helicase_UvrD-like_C"/>
</dbReference>
<dbReference type="InterPro" id="IPR000212">
    <property type="entry name" value="DNA_helicase_UvrD/REP"/>
</dbReference>
<dbReference type="InterPro" id="IPR027417">
    <property type="entry name" value="P-loop_NTPase"/>
</dbReference>
<dbReference type="InterPro" id="IPR011604">
    <property type="entry name" value="PDDEXK-like_dom_sf"/>
</dbReference>
<dbReference type="InterPro" id="IPR038726">
    <property type="entry name" value="PDDEXK_AddAB-type"/>
</dbReference>
<dbReference type="InterPro" id="IPR011335">
    <property type="entry name" value="Restrct_endonuc-II-like"/>
</dbReference>
<dbReference type="InterPro" id="IPR014016">
    <property type="entry name" value="UvrD-like_ATP-bd"/>
</dbReference>
<dbReference type="NCBIfam" id="TIGR02785">
    <property type="entry name" value="addA_Gpos"/>
    <property type="match status" value="1"/>
</dbReference>
<dbReference type="PANTHER" id="PTHR11070:SF48">
    <property type="entry name" value="ATP-DEPENDENT HELICASE_NUCLEASE SUBUNIT A"/>
    <property type="match status" value="1"/>
</dbReference>
<dbReference type="PANTHER" id="PTHR11070">
    <property type="entry name" value="UVRD / RECB / PCRA DNA HELICASE FAMILY MEMBER"/>
    <property type="match status" value="1"/>
</dbReference>
<dbReference type="Pfam" id="PF12705">
    <property type="entry name" value="PDDEXK_1"/>
    <property type="match status" value="1"/>
</dbReference>
<dbReference type="Pfam" id="PF00580">
    <property type="entry name" value="UvrD-helicase"/>
    <property type="match status" value="2"/>
</dbReference>
<dbReference type="Pfam" id="PF13361">
    <property type="entry name" value="UvrD_C"/>
    <property type="match status" value="1"/>
</dbReference>
<dbReference type="SUPFAM" id="SSF52540">
    <property type="entry name" value="P-loop containing nucleoside triphosphate hydrolases"/>
    <property type="match status" value="1"/>
</dbReference>
<dbReference type="SUPFAM" id="SSF52980">
    <property type="entry name" value="Restriction endonuclease-like"/>
    <property type="match status" value="1"/>
</dbReference>
<dbReference type="PROSITE" id="PS51198">
    <property type="entry name" value="UVRD_HELICASE_ATP_BIND"/>
    <property type="match status" value="1"/>
</dbReference>
<dbReference type="PROSITE" id="PS51217">
    <property type="entry name" value="UVRD_HELICASE_CTER"/>
    <property type="match status" value="1"/>
</dbReference>
<evidence type="ECO:0000255" key="1">
    <source>
        <dbReference type="HAMAP-Rule" id="MF_01451"/>
    </source>
</evidence>
<feature type="chain" id="PRO_0000379302" description="ATP-dependent helicase/nuclease subunit A">
    <location>
        <begin position="1"/>
        <end position="1282"/>
    </location>
</feature>
<feature type="domain" description="UvrD-like helicase ATP-binding" evidence="1">
    <location>
        <begin position="10"/>
        <end position="481"/>
    </location>
</feature>
<feature type="domain" description="UvrD-like helicase C-terminal" evidence="1">
    <location>
        <begin position="516"/>
        <end position="820"/>
    </location>
</feature>
<feature type="binding site" evidence="1">
    <location>
        <begin position="31"/>
        <end position="38"/>
    </location>
    <ligand>
        <name>ATP</name>
        <dbReference type="ChEBI" id="CHEBI:30616"/>
    </ligand>
</feature>
<keyword id="KW-0067">ATP-binding</keyword>
<keyword id="KW-0227">DNA damage</keyword>
<keyword id="KW-0234">DNA repair</keyword>
<keyword id="KW-0238">DNA-binding</keyword>
<keyword id="KW-0269">Exonuclease</keyword>
<keyword id="KW-0347">Helicase</keyword>
<keyword id="KW-0378">Hydrolase</keyword>
<keyword id="KW-0413">Isomerase</keyword>
<keyword id="KW-0540">Nuclease</keyword>
<keyword id="KW-0547">Nucleotide-binding</keyword>
<keyword id="KW-1185">Reference proteome</keyword>
<protein>
    <recommendedName>
        <fullName evidence="1">ATP-dependent helicase/nuclease subunit A</fullName>
        <ecNumber evidence="1">3.1.-.-</ecNumber>
        <ecNumber evidence="1">5.6.2.4</ecNumber>
    </recommendedName>
    <alternativeName>
        <fullName evidence="1">ATP-dependent helicase/nuclease AddA</fullName>
    </alternativeName>
    <alternativeName>
        <fullName evidence="1">DNA 3'-5' helicase AddA</fullName>
    </alternativeName>
</protein>
<proteinExistence type="inferred from homology"/>
<organism>
    <name type="scientific">Natranaerobius thermophilus (strain ATCC BAA-1301 / DSM 18059 / JW/NM-WN-LF)</name>
    <dbReference type="NCBI Taxonomy" id="457570"/>
    <lineage>
        <taxon>Bacteria</taxon>
        <taxon>Bacillati</taxon>
        <taxon>Bacillota</taxon>
        <taxon>Clostridia</taxon>
        <taxon>Natranaerobiales</taxon>
        <taxon>Natranaerobiaceae</taxon>
        <taxon>Natranaerobius</taxon>
    </lineage>
</organism>
<comment type="function">
    <text evidence="1">The heterodimer acts as both an ATP-dependent DNA helicase and an ATP-dependent, dual-direction single-stranded exonuclease. Recognizes the chi site generating a DNA molecule suitable for the initiation of homologous recombination. The AddA nuclease domain is required for chi fragment generation; this subunit has the helicase and 3' -&gt; 5' nuclease activities.</text>
</comment>
<comment type="catalytic activity">
    <reaction evidence="1">
        <text>Couples ATP hydrolysis with the unwinding of duplex DNA by translocating in the 3'-5' direction.</text>
        <dbReference type="EC" id="5.6.2.4"/>
    </reaction>
</comment>
<comment type="catalytic activity">
    <reaction evidence="1">
        <text>ATP + H2O = ADP + phosphate + H(+)</text>
        <dbReference type="Rhea" id="RHEA:13065"/>
        <dbReference type="ChEBI" id="CHEBI:15377"/>
        <dbReference type="ChEBI" id="CHEBI:15378"/>
        <dbReference type="ChEBI" id="CHEBI:30616"/>
        <dbReference type="ChEBI" id="CHEBI:43474"/>
        <dbReference type="ChEBI" id="CHEBI:456216"/>
        <dbReference type="EC" id="5.6.2.4"/>
    </reaction>
</comment>
<comment type="cofactor">
    <cofactor evidence="1">
        <name>Mg(2+)</name>
        <dbReference type="ChEBI" id="CHEBI:18420"/>
    </cofactor>
</comment>
<comment type="subunit">
    <text evidence="1">Heterodimer of AddA and AddB/RexB.</text>
</comment>
<comment type="similarity">
    <text evidence="1">Belongs to the helicase family. AddA subfamily.</text>
</comment>
<accession>B2A610</accession>
<sequence length="1282" mass="148738">MVQENNNTQSKWTDSQRQVIDENYHHILVSAGAGAGKTAVLVQRIISKLIDPHDDLTVNGLLVVTFTEKAANEMRDRIARELKKALSQDPENDHLKKQLYLLNKANISTLHSFCLEILRHYFYYLDIDPAFSVASEYDVELLRQSVIDNYLEEEYGLGEQSFYLLVDSYGGDKNDEKLKKMILTLHRFSRSHPRPRKWLQSVKDHFEVSTDDDLTNTVYYLEIQKDIETLFKQCINYFKRALQTSEQPGGPYQYAETLLEEIEQVQNFTQQLVEVENHSFDWNSFAERVAGFKFSKLPSVSKNDDVDEDLKKDCKKLRDHGKKTFQKLVQNYFTRSKDELLRDLQQLSPLMNKLIDMVINMDDKYEEVKKQRGIMDFSDLEHYVYELLDQYPEIVSELHQRYDEVMVDEYQDINQVQNAILEKLTGQQSISPDLFMVGDVKQSIYRFRLAEPELFLNKYDTFDQRSEEGSLIELQENFRSSPMVLESVNYLFSRIMTGSLSGIEYNEKVKLIPASKPRELYLNEDDNEDDKYEGQAENENQVIDGRTEVHLLENKDTNSREEDTEREAQLIATTINSLVEEEYRIYDRDLDDYRKLDYSDFVILSRKTKEQAELVTNVFQEHGVPLYAELDTGYFAAQEVQVMLSLLKIIDNPRQDIPLAGVLRSPLVGLDSNELVEIRRSNPGTDYYEACKRVLTNSIEQQNQCSEKTIQKMQKFFSQLERWRRISRERSLAELIWDIYQITDYLDYVAGFPGGRERQANLWSFYDRALQFDSFSHSGLVKFLNFIEKLVEQDFDLGKARTVSENENVVRLMSIHKSKGLEFPVVFVMGLGNNFNFNDQKGDLLLHKDLGLGPKLVDLTNRIKYPTIAHQAIKGSLGRETLAEEMRILYVAMTRAEEKLFLVGSGKDIESKISVPEEPAAAQNYLDWIYPQLGEDSELFHKIWNDIPGQQDGKSVEYNWKSYFESLLSQTFTWEVDQEEFEDQKRTLEQAISYSYPYNIATEIVGKMSVTDLAKSDTYIDSKIVSQNQSLSSVQDHYKKLAATQIPMFLETTEDAGDNKYESYKEHHTPSKRPEFLKSNSGLTGAEAGTSIHLAFQHLPINSDLNSQEFSEEQISNQLDDLVNKEIITQAQRDVISEDLIMKFFQSELGQAILERPKGLKRELPFTLGVPAWEMLAGSEECQAELEAENIETTELQGLSDETVVIQGVIDYLFWDGTNYYLIDFKTDKLNTSNMDEIEKRLQGKYRMQIQMYLRAITEIFNITPTKAYLYHVPTGNWIQVE</sequence>
<gene>
    <name evidence="1" type="primary">addA</name>
    <name type="ordered locus">Nther_1855</name>
</gene>